<name>PPCT_MOUSE</name>
<evidence type="ECO:0000250" key="1"/>
<evidence type="ECO:0000250" key="2">
    <source>
        <dbReference type="UniProtKB" id="P02720"/>
    </source>
</evidence>
<evidence type="ECO:0000250" key="3">
    <source>
        <dbReference type="UniProtKB" id="Q9UKL6"/>
    </source>
</evidence>
<evidence type="ECO:0000255" key="4">
    <source>
        <dbReference type="PROSITE-ProRule" id="PRU00197"/>
    </source>
</evidence>
<evidence type="ECO:0000269" key="5">
    <source>
    </source>
</evidence>
<evidence type="ECO:0000269" key="6">
    <source>
    </source>
</evidence>
<evidence type="ECO:0000305" key="7"/>
<keyword id="KW-0007">Acetylation</keyword>
<keyword id="KW-0963">Cytoplasm</keyword>
<keyword id="KW-0445">Lipid transport</keyword>
<keyword id="KW-0446">Lipid-binding</keyword>
<keyword id="KW-0597">Phosphoprotein</keyword>
<keyword id="KW-1185">Reference proteome</keyword>
<keyword id="KW-0813">Transport</keyword>
<proteinExistence type="evidence at protein level"/>
<dbReference type="EMBL" id="AF151639">
    <property type="protein sequence ID" value="AAF02537.1"/>
    <property type="molecule type" value="mRNA"/>
</dbReference>
<dbReference type="EMBL" id="Z50024">
    <property type="protein sequence ID" value="CAA90328.1"/>
    <property type="molecule type" value="mRNA"/>
</dbReference>
<dbReference type="EMBL" id="AF114437">
    <property type="protein sequence ID" value="AAF08346.1"/>
    <property type="molecule type" value="mRNA"/>
</dbReference>
<dbReference type="CCDS" id="CCDS25238.1"/>
<dbReference type="PIR" id="S68246">
    <property type="entry name" value="S68246"/>
</dbReference>
<dbReference type="SMR" id="P53808"/>
<dbReference type="BioGRID" id="202066">
    <property type="interactions" value="2"/>
</dbReference>
<dbReference type="FunCoup" id="P53808">
    <property type="interactions" value="3"/>
</dbReference>
<dbReference type="STRING" id="10090.ENSMUSP00000020864"/>
<dbReference type="iPTMnet" id="P53808"/>
<dbReference type="PhosphoSitePlus" id="P53808"/>
<dbReference type="SwissPalm" id="P53808"/>
<dbReference type="jPOST" id="P53808"/>
<dbReference type="PaxDb" id="10090-ENSMUSP00000020864"/>
<dbReference type="PeptideAtlas" id="P53808"/>
<dbReference type="ProteomicsDB" id="289803"/>
<dbReference type="Pumba" id="P53808"/>
<dbReference type="DNASU" id="18559"/>
<dbReference type="AGR" id="MGI:107375"/>
<dbReference type="MGI" id="MGI:107375">
    <property type="gene designation" value="Pctp"/>
</dbReference>
<dbReference type="eggNOG" id="KOG2761">
    <property type="taxonomic scope" value="Eukaryota"/>
</dbReference>
<dbReference type="InParanoid" id="P53808"/>
<dbReference type="PhylomeDB" id="P53808"/>
<dbReference type="Reactome" id="R-MMU-1483191">
    <property type="pathway name" value="Synthesis of PC"/>
</dbReference>
<dbReference type="Reactome" id="R-MMU-77289">
    <property type="pathway name" value="Mitochondrial Fatty Acid Beta-Oxidation"/>
</dbReference>
<dbReference type="SABIO-RK" id="P53808"/>
<dbReference type="PRO" id="PR:P53808"/>
<dbReference type="Proteomes" id="UP000000589">
    <property type="component" value="Unplaced"/>
</dbReference>
<dbReference type="RNAct" id="P53808">
    <property type="molecule type" value="protein"/>
</dbReference>
<dbReference type="GO" id="GO:0005829">
    <property type="term" value="C:cytosol"/>
    <property type="evidence" value="ECO:0000314"/>
    <property type="project" value="FlyBase"/>
</dbReference>
<dbReference type="GO" id="GO:0031210">
    <property type="term" value="F:phosphatidylcholine binding"/>
    <property type="evidence" value="ECO:0000250"/>
    <property type="project" value="UniProtKB"/>
</dbReference>
<dbReference type="GO" id="GO:0008525">
    <property type="term" value="F:phosphatidylcholine transporter activity"/>
    <property type="evidence" value="ECO:0000250"/>
    <property type="project" value="UniProtKB"/>
</dbReference>
<dbReference type="GO" id="GO:0008203">
    <property type="term" value="P:cholesterol metabolic process"/>
    <property type="evidence" value="ECO:0000315"/>
    <property type="project" value="MGI"/>
</dbReference>
<dbReference type="GO" id="GO:0120163">
    <property type="term" value="P:negative regulation of cold-induced thermogenesis"/>
    <property type="evidence" value="ECO:0000315"/>
    <property type="project" value="YuBioLab"/>
</dbReference>
<dbReference type="GO" id="GO:0015914">
    <property type="term" value="P:phospholipid transport"/>
    <property type="evidence" value="ECO:0000250"/>
    <property type="project" value="UniProtKB"/>
</dbReference>
<dbReference type="FunFam" id="3.30.530.20:FF:000017">
    <property type="entry name" value="Phosphatidylcholine transfer protein, putative"/>
    <property type="match status" value="1"/>
</dbReference>
<dbReference type="Gene3D" id="3.30.530.20">
    <property type="match status" value="1"/>
</dbReference>
<dbReference type="InterPro" id="IPR023393">
    <property type="entry name" value="START-like_dom_sf"/>
</dbReference>
<dbReference type="InterPro" id="IPR002913">
    <property type="entry name" value="START_lipid-bd_dom"/>
</dbReference>
<dbReference type="InterPro" id="IPR051213">
    <property type="entry name" value="START_lipid_transfer"/>
</dbReference>
<dbReference type="PANTHER" id="PTHR19308">
    <property type="entry name" value="PHOSPHATIDYLCHOLINE TRANSFER PROTEIN"/>
    <property type="match status" value="1"/>
</dbReference>
<dbReference type="PANTHER" id="PTHR19308:SF39">
    <property type="entry name" value="PHOSPHATIDYLCHOLINE TRANSFER PROTEIN"/>
    <property type="match status" value="1"/>
</dbReference>
<dbReference type="Pfam" id="PF01852">
    <property type="entry name" value="START"/>
    <property type="match status" value="1"/>
</dbReference>
<dbReference type="SMART" id="SM00234">
    <property type="entry name" value="START"/>
    <property type="match status" value="1"/>
</dbReference>
<dbReference type="SUPFAM" id="SSF55961">
    <property type="entry name" value="Bet v1-like"/>
    <property type="match status" value="1"/>
</dbReference>
<dbReference type="PROSITE" id="PS50848">
    <property type="entry name" value="START"/>
    <property type="match status" value="1"/>
</dbReference>
<comment type="function">
    <text>Catalyzes the transfer of phosphatidylcholine between membranes. Binds a single lipid molecule.</text>
</comment>
<comment type="subunit">
    <text evidence="6">Interacts with ACOT13/THEM2.</text>
</comment>
<comment type="subcellular location">
    <subcellularLocation>
        <location evidence="5">Cytoplasm</location>
    </subcellularLocation>
</comment>
<comment type="tissue specificity">
    <text evidence="5">Abundant in liver of pups but levels in liver decrease 10-fold about 2 weeks after birth. In adult, highly expressed in epididymis, testis, kidney and bone-marrow derived mast cells.</text>
</comment>
<organism>
    <name type="scientific">Mus musculus</name>
    <name type="common">Mouse</name>
    <dbReference type="NCBI Taxonomy" id="10090"/>
    <lineage>
        <taxon>Eukaryota</taxon>
        <taxon>Metazoa</taxon>
        <taxon>Chordata</taxon>
        <taxon>Craniata</taxon>
        <taxon>Vertebrata</taxon>
        <taxon>Euteleostomi</taxon>
        <taxon>Mammalia</taxon>
        <taxon>Eutheria</taxon>
        <taxon>Euarchontoglires</taxon>
        <taxon>Glires</taxon>
        <taxon>Rodentia</taxon>
        <taxon>Myomorpha</taxon>
        <taxon>Muroidea</taxon>
        <taxon>Muridae</taxon>
        <taxon>Murinae</taxon>
        <taxon>Mus</taxon>
        <taxon>Mus</taxon>
    </lineage>
</organism>
<sequence>MAGAACCFSDEQFREACAELQKPALTGADWQLLVEASGITIYRLLDQPSGLYEYKVFGVLEGCSPALLTDVYMDLDYRKQWDQYVKELYEKESDEQMVAYWEVKYPFPLSNRDYVYTRQRRDLDVDRRKIYVVLAQSISAPQFPEKSGVIRVKQYKQSLAIESDGKKGSRVFMYYFDNPGGQIPSWLINWAAKNGVPNFLKDMVKACQNYHKKT</sequence>
<reference key="1">
    <citation type="journal article" date="1999" name="Proc. Natl. Acad. Sci. U.S.A.">
        <title>Mice without phosphatidylcholine transfer protein have no defects in the secretion of PC into bile or into the lung airspaces.</title>
        <authorList>
            <person name="van Helvoort A."/>
            <person name="de Brouwer A."/>
            <person name="Ottenhoff R."/>
            <person name="Brouwers J.F.H.M."/>
            <person name="Wijnholds J."/>
            <person name="Beijnen J.H."/>
            <person name="Rijneveld A."/>
            <person name="van der Poll T."/>
            <person name="van der Valk M.A."/>
            <person name="Majoor D."/>
            <person name="Voorhout W."/>
            <person name="Wirtz K.W.A."/>
            <person name="Oude Elferink R.P.J."/>
            <person name="Borst P."/>
        </authorList>
    </citation>
    <scope>NUCLEOTIDE SEQUENCE [MRNA]</scope>
    <scope>SUBCELLULAR LOCATION</scope>
    <scope>TISSUE SPECIFICITY</scope>
    <source>
        <strain>129/Ola</strain>
        <tissue>Liver</tissue>
    </source>
</reference>
<reference key="2">
    <citation type="journal article" date="1996" name="Biochem. J.">
        <title>cDNA cloning and tissue-specific expression of the phosphatidylcholine transfer protein gene.</title>
        <authorList>
            <person name="Geijtenbeek T.B.H."/>
            <person name="Smith A.J."/>
            <person name="Borst P."/>
            <person name="Wirtz K.W.A."/>
        </authorList>
    </citation>
    <scope>NUCLEOTIDE SEQUENCE [MRNA] OF 41-214</scope>
    <source>
        <tissue>Lung</tissue>
    </source>
</reference>
<reference key="3">
    <citation type="journal article" date="1999" name="Biochim. Biophys. Acta">
        <title>Cloning, tissue-specific expression, gene structure and chromosomal localization of human phosphatidylcholine transfer protein.</title>
        <authorList>
            <person name="Cohen D.E."/>
            <person name="Green R.M."/>
            <person name="Wu M.K."/>
            <person name="Beier D.R."/>
        </authorList>
    </citation>
    <scope>NUCLEOTIDE SEQUENCE [MRNA] OF 82-214</scope>
    <source>
        <strain>C57BL/6 X CBA</strain>
        <tissue>Liver</tissue>
    </source>
</reference>
<reference key="4">
    <citation type="journal article" date="2007" name="J. Biol. Chem.">
        <title>Interacting proteins dictate function of the minimal START domain phosphatidylcholine transfer protein/StarD2.</title>
        <authorList>
            <person name="Kanno K."/>
            <person name="Wu M.K."/>
            <person name="Agate D.S."/>
            <person name="Fanelli B.J."/>
            <person name="Wagle N."/>
            <person name="Scapa E.F."/>
            <person name="Ukomadu C."/>
            <person name="Cohen D.E."/>
        </authorList>
    </citation>
    <scope>INTERACTION WITH ACOT13/THEM2 AND PAX3</scope>
</reference>
<reference key="5">
    <citation type="journal article" date="2010" name="Cell">
        <title>A tissue-specific atlas of mouse protein phosphorylation and expression.</title>
        <authorList>
            <person name="Huttlin E.L."/>
            <person name="Jedrychowski M.P."/>
            <person name="Elias J.E."/>
            <person name="Goswami T."/>
            <person name="Rad R."/>
            <person name="Beausoleil S.A."/>
            <person name="Villen J."/>
            <person name="Haas W."/>
            <person name="Sowa M.E."/>
            <person name="Gygi S.P."/>
        </authorList>
    </citation>
    <scope>IDENTIFICATION BY MASS SPECTROMETRY [LARGE SCALE ANALYSIS]</scope>
    <source>
        <tissue>Kidney</tissue>
        <tissue>Liver</tissue>
        <tissue>Lung</tissue>
        <tissue>Pancreas</tissue>
        <tissue>Testis</tissue>
    </source>
</reference>
<gene>
    <name type="primary">Pctp</name>
    <name type="synonym">Stard2</name>
</gene>
<protein>
    <recommendedName>
        <fullName>Phosphatidylcholine transfer protein</fullName>
        <shortName>PC-TP</shortName>
    </recommendedName>
    <alternativeName>
        <fullName>START domain-containing protein 2</fullName>
        <shortName>StARD2</shortName>
    </alternativeName>
    <alternativeName>
        <fullName>StAR-related lipid transfer protein 2</fullName>
    </alternativeName>
</protein>
<feature type="chain" id="PRO_0000220659" description="Phosphatidylcholine transfer protein">
    <location>
        <begin position="1"/>
        <end position="214"/>
    </location>
</feature>
<feature type="domain" description="START" evidence="4">
    <location>
        <begin position="1"/>
        <end position="212"/>
    </location>
</feature>
<feature type="binding site" evidence="1">
    <location>
        <position position="72"/>
    </location>
    <ligand>
        <name>a 1,2-diacyl-sn-glycero-3-phosphocholine</name>
        <dbReference type="ChEBI" id="CHEBI:57643"/>
    </ligand>
</feature>
<feature type="binding site" evidence="1">
    <location>
        <position position="78"/>
    </location>
    <ligand>
        <name>a 1,2-diacyl-sn-glycero-3-phosphocholine</name>
        <dbReference type="ChEBI" id="CHEBI:57643"/>
    </ligand>
</feature>
<feature type="binding site" evidence="1">
    <location>
        <position position="157"/>
    </location>
    <ligand>
        <name>a 1,2-diacyl-sn-glycero-3-phosphocholine</name>
        <dbReference type="ChEBI" id="CHEBI:57643"/>
    </ligand>
</feature>
<feature type="modified residue" description="N-acetylmethionine" evidence="2">
    <location>
        <position position="1"/>
    </location>
</feature>
<feature type="modified residue" description="Phosphoserine" evidence="3">
    <location>
        <position position="139"/>
    </location>
</feature>
<feature type="sequence conflict" description="In Ref. 3; AAF08346." evidence="7" ref="3">
    <original>E</original>
    <variation>D</variation>
    <location>
        <position position="90"/>
    </location>
</feature>
<feature type="sequence conflict" description="In Ref. 3; AAF08346." evidence="7" ref="3">
    <original>R</original>
    <variation>G</variation>
    <location>
        <position position="127"/>
    </location>
</feature>
<accession>P53808</accession>
<accession>Q9QZX0</accession>
<accession>Q9R058</accession>